<sequence>MTIHAQTPEPFSMSRAFTPRRLLLAVLLVALSALVLLGQSFRVFDRAWFAVQEWRHADAWKERSIWLPDYRVRIEAQPIEGLNDDVSALTFDPDRRTLFTVTNQPAQIIELSLQGKVLRTIPLTGFGDAEAIEYISRGVYVITDERQQRLVKVRLEDDTRFIDAADAQQLSLGIGLNGNKGFEGLAYDAEGKRLFVAKERDPVRIYEIHGFPHTQADKPFAVHVVDDPGRDKRLFVRDLSSLQFDEGTGHLLALSDESRLVVELDTDGEPVSTLSLLRGMHGLKRSVPQAEGVAMDDRGVLYLVSEPNLFYVFSKDEPAQP</sequence>
<evidence type="ECO:0000255" key="1"/>
<evidence type="ECO:0000269" key="2">
    <source>
    </source>
</evidence>
<evidence type="ECO:0000269" key="3">
    <source>
    </source>
</evidence>
<evidence type="ECO:0000303" key="4">
    <source>
    </source>
</evidence>
<evidence type="ECO:0000303" key="5">
    <source>
    </source>
</evidence>
<evidence type="ECO:0000305" key="6"/>
<evidence type="ECO:0000312" key="7">
    <source>
        <dbReference type="EMBL" id="AAG03716.1"/>
    </source>
</evidence>
<evidence type="ECO:0000312" key="8">
    <source>
        <dbReference type="Proteomes" id="UP000002438"/>
    </source>
</evidence>
<protein>
    <recommendedName>
        <fullName evidence="4">Calcium-regulated beta-propeller protein CarP</fullName>
    </recommendedName>
    <alternativeName>
        <fullName evidence="5">Calcium-regulated protein CarP</fullName>
    </alternativeName>
    <alternativeName>
        <fullName evidence="6">Protein CarP</fullName>
    </alternativeName>
</protein>
<proteinExistence type="evidence at transcript level"/>
<gene>
    <name evidence="4" type="primary">carP</name>
    <name evidence="7" type="ordered locus">PA0327</name>
</gene>
<name>CARP_PSEAE</name>
<keyword id="KW-0997">Cell inner membrane</keyword>
<keyword id="KW-1003">Cell membrane</keyword>
<keyword id="KW-0472">Membrane</keyword>
<keyword id="KW-1185">Reference proteome</keyword>
<keyword id="KW-0732">Signal</keyword>
<comment type="function">
    <text evidence="2 3">Plays a role in intracellular Ca(2+) homeostasis (PubMed:26755627). Involved in modulating Ca(2+)-induced swarming motility and pyocyanine production (PubMed:26755627). Plays a role in regulating virulence in a Ca(2+)-dependent manner (PubMed:33674436). Involved in cell protection against oxidative stress in the presence of elevated Ca(2+) (PubMed:33674436).</text>
</comment>
<comment type="subcellular location">
    <subcellularLocation>
        <location evidence="4 5">Cell inner membrane</location>
        <topology evidence="4 5">Peripheral membrane protein</topology>
        <orientation evidence="4 5">Periplasmic side</orientation>
    </subcellularLocation>
</comment>
<comment type="induction">
    <text evidence="3">Up-regulated by Ca(2+), with the highest induction during the transition to the stationary phase of growth (PubMed:33674436). Up-regulated by an unknown molecule secreted by P.aeruginosa during stationary phase, probably an autoinducer; induction is dependent upon one or more of the quorum-sensing synthases, LasL, RhlL and PqsA (PubMed:33674436). Up-regulated by Fe(2+); acts synergistically with Ca(2+) (PubMed:33674436). Up-regulated by UV as a part of the oxidative stress response (PubMed:33674436).</text>
</comment>
<comment type="disruption phenotype">
    <text evidence="2 3">Impairs growth at high Ca(2+) level, causing extended lag phase and decrease in growth rate (PubMed:26755627). Raises the basal intracellular concentration of Ca(2+), and impairs recovery to the resting intracellular Ca(2+) (PubMed:26755627). Significantly alters the morphology of swarming colonies at elevated Ca(2+) (PubMed:26755627). Reduces pyocyanine production by 72% (PubMed:26755627). Increases sensitivity to tobramycin at high Ca(2+) (PubMed:26755627). Reduces survival of the greater wax moth Galleria mellonella infection model, when in the presence of 10mM CaCl(2) (PubMed:33674436).</text>
</comment>
<comment type="similarity">
    <text evidence="6">Belongs to the YjiK family.</text>
</comment>
<feature type="signal peptide" evidence="1">
    <location>
        <begin position="1"/>
        <end position="42"/>
    </location>
</feature>
<feature type="chain" id="PRO_0000459111" description="Calcium-regulated beta-propeller protein CarP" evidence="1">
    <location>
        <begin position="43"/>
        <end position="321"/>
    </location>
</feature>
<organism evidence="8">
    <name type="scientific">Pseudomonas aeruginosa (strain ATCC 15692 / DSM 22644 / CIP 104116 / JCM 14847 / LMG 12228 / 1C / PRS 101 / PAO1)</name>
    <dbReference type="NCBI Taxonomy" id="208964"/>
    <lineage>
        <taxon>Bacteria</taxon>
        <taxon>Pseudomonadati</taxon>
        <taxon>Pseudomonadota</taxon>
        <taxon>Gammaproteobacteria</taxon>
        <taxon>Pseudomonadales</taxon>
        <taxon>Pseudomonadaceae</taxon>
        <taxon>Pseudomonas</taxon>
    </lineage>
</organism>
<dbReference type="EMBL" id="AE004091">
    <property type="protein sequence ID" value="AAG03716.1"/>
    <property type="molecule type" value="Genomic_DNA"/>
</dbReference>
<dbReference type="PIR" id="H83605">
    <property type="entry name" value="H83605"/>
</dbReference>
<dbReference type="RefSeq" id="NP_249018.1">
    <property type="nucleotide sequence ID" value="NC_002516.2"/>
</dbReference>
<dbReference type="RefSeq" id="WP_003118774.1">
    <property type="nucleotide sequence ID" value="NZ_QZGE01000016.1"/>
</dbReference>
<dbReference type="SMR" id="Q9I6G4"/>
<dbReference type="FunCoup" id="Q9I6G4">
    <property type="interactions" value="84"/>
</dbReference>
<dbReference type="STRING" id="208964.PA0327"/>
<dbReference type="PaxDb" id="208964-PA0327"/>
<dbReference type="DNASU" id="879241"/>
<dbReference type="GeneID" id="879241"/>
<dbReference type="KEGG" id="pae:PA0327"/>
<dbReference type="PATRIC" id="fig|208964.12.peg.343"/>
<dbReference type="PseudoCAP" id="PA0327"/>
<dbReference type="HOGENOM" id="CLU_055438_0_1_6"/>
<dbReference type="InParanoid" id="Q9I6G4"/>
<dbReference type="OrthoDB" id="6080098at2"/>
<dbReference type="PhylomeDB" id="Q9I6G4"/>
<dbReference type="BioCyc" id="PAER208964:G1FZ6-330-MONOMER"/>
<dbReference type="Proteomes" id="UP000002438">
    <property type="component" value="Chromosome"/>
</dbReference>
<dbReference type="GO" id="GO:0005886">
    <property type="term" value="C:plasma membrane"/>
    <property type="evidence" value="ECO:0007669"/>
    <property type="project" value="UniProtKB-SubCell"/>
</dbReference>
<dbReference type="GO" id="GO:0055074">
    <property type="term" value="P:calcium ion homeostasis"/>
    <property type="evidence" value="ECO:0000315"/>
    <property type="project" value="UniProtKB"/>
</dbReference>
<dbReference type="GO" id="GO:0048870">
    <property type="term" value="P:cell motility"/>
    <property type="evidence" value="ECO:0000315"/>
    <property type="project" value="UniProtKB"/>
</dbReference>
<dbReference type="GO" id="GO:0070301">
    <property type="term" value="P:cellular response to hydrogen peroxide"/>
    <property type="evidence" value="ECO:0000315"/>
    <property type="project" value="UniProtKB"/>
</dbReference>
<dbReference type="GO" id="GO:0106220">
    <property type="term" value="P:pyocyanine biosynthetic process"/>
    <property type="evidence" value="ECO:0000315"/>
    <property type="project" value="UniProtKB"/>
</dbReference>
<dbReference type="GO" id="GO:0051592">
    <property type="term" value="P:response to calcium ion"/>
    <property type="evidence" value="ECO:0000315"/>
    <property type="project" value="UniProtKB"/>
</dbReference>
<dbReference type="GO" id="GO:0010040">
    <property type="term" value="P:response to iron(II) ion"/>
    <property type="evidence" value="ECO:0000315"/>
    <property type="project" value="UniProtKB"/>
</dbReference>
<dbReference type="CDD" id="cd09971">
    <property type="entry name" value="SdiA-regulated"/>
    <property type="match status" value="1"/>
</dbReference>
<dbReference type="Gene3D" id="2.120.10.30">
    <property type="entry name" value="TolB, C-terminal domain"/>
    <property type="match status" value="1"/>
</dbReference>
<dbReference type="InterPro" id="IPR011042">
    <property type="entry name" value="6-blade_b-propeller_TolB-like"/>
</dbReference>
<dbReference type="InterPro" id="IPR009722">
    <property type="entry name" value="YjiK/CarP"/>
</dbReference>
<dbReference type="Pfam" id="PF06977">
    <property type="entry name" value="SdiA-regulated"/>
    <property type="match status" value="1"/>
</dbReference>
<dbReference type="SUPFAM" id="SSF50956">
    <property type="entry name" value="Thermostable phytase (3-phytase)"/>
    <property type="match status" value="1"/>
</dbReference>
<reference evidence="8" key="1">
    <citation type="journal article" date="2000" name="Nature">
        <title>Complete genome sequence of Pseudomonas aeruginosa PAO1, an opportunistic pathogen.</title>
        <authorList>
            <person name="Stover C.K."/>
            <person name="Pham X.-Q.T."/>
            <person name="Erwin A.L."/>
            <person name="Mizoguchi S.D."/>
            <person name="Warrener P."/>
            <person name="Hickey M.J."/>
            <person name="Brinkman F.S.L."/>
            <person name="Hufnagle W.O."/>
            <person name="Kowalik D.J."/>
            <person name="Lagrou M."/>
            <person name="Garber R.L."/>
            <person name="Goltry L."/>
            <person name="Tolentino E."/>
            <person name="Westbrock-Wadman S."/>
            <person name="Yuan Y."/>
            <person name="Brody L.L."/>
            <person name="Coulter S.N."/>
            <person name="Folger K.R."/>
            <person name="Kas A."/>
            <person name="Larbig K."/>
            <person name="Lim R.M."/>
            <person name="Smith K.A."/>
            <person name="Spencer D.H."/>
            <person name="Wong G.K.-S."/>
            <person name="Wu Z."/>
            <person name="Paulsen I.T."/>
            <person name="Reizer J."/>
            <person name="Saier M.H. Jr."/>
            <person name="Hancock R.E.W."/>
            <person name="Lory S."/>
            <person name="Olson M.V."/>
        </authorList>
    </citation>
    <scope>NUCLEOTIDE SEQUENCE [LARGE SCALE GENOMIC DNA]</scope>
    <source>
        <strain evidence="8">ATCC 15692 / DSM 22644 / CIP 104116 / JCM 14847 / LMG 12228 / 1C / PRS 101 / PAO1</strain>
    </source>
</reference>
<reference evidence="6" key="2">
    <citation type="journal article" date="2016" name="J. Bacteriol.">
        <title>The Pseudomonas aeruginosa PAO1 Two-Component Regulator CarSR Regulates Calcium Homeostasis and Calcium-Induced Virulence Factor Production through Its Regulatory Targets CarO and CarP.</title>
        <authorList>
            <person name="Guragain M."/>
            <person name="King M.M."/>
            <person name="Williamson K.S."/>
            <person name="Perez-Osorio A.C."/>
            <person name="Akiyama T."/>
            <person name="Khanam S."/>
            <person name="Patrauchan M.A."/>
            <person name="Franklin M.J."/>
        </authorList>
    </citation>
    <scope>FUNCTION</scope>
    <scope>SUBCELLULAR LOCATION</scope>
    <scope>DISRUPTION PHENOTYPE</scope>
</reference>
<reference evidence="6" key="3">
    <citation type="journal article" date="2021" name="Appl. Environ. Microbiol.">
        <title>Calcium-Regulated Protein CarP Responds to Multiple Host Signals and Mediates Regulation of Pseudomonas aeruginosa Virulence by Calcium.</title>
        <authorList>
            <person name="King M."/>
            <person name="Kubo A."/>
            <person name="Kafer L."/>
            <person name="Braga R."/>
            <person name="McLeod D."/>
            <person name="Khanam S."/>
            <person name="Conway T."/>
            <person name="Patrauchan M.A."/>
        </authorList>
    </citation>
    <scope>FUNCTION</scope>
    <scope>SUBCELLULAR LOCATION</scope>
    <scope>INDUCTION</scope>
    <scope>DISRUPTION PHENOTYPE</scope>
</reference>
<accession>Q9I6G4</accession>